<name>GPN2_PIG</name>
<protein>
    <recommendedName>
        <fullName evidence="2">GPN-loop GTPase 2</fullName>
    </recommendedName>
    <alternativeName>
        <fullName evidence="2">ATP-binding domain 1 family member B</fullName>
    </alternativeName>
</protein>
<reference key="1">
    <citation type="submission" date="2005-03" db="EMBL/GenBank/DDBJ databases">
        <authorList>
            <person name="Harhay G.P."/>
            <person name="Sonstegard T.S."/>
            <person name="Keele J.W."/>
            <person name="Heaton M.P."/>
            <person name="Clawson M.L."/>
            <person name="Snelling W.M."/>
            <person name="Wiedmann R.T."/>
            <person name="Van Tassell C.P."/>
            <person name="Smith T.P.L."/>
        </authorList>
    </citation>
    <scope>NUCLEOTIDE SEQUENCE [MRNA]</scope>
</reference>
<comment type="function">
    <text evidence="1">Small GTPase required for proper localization of RNA polymerase II and III (RNAPII and RNAPIII). May act at an RNAP assembly step prior to nuclear import.</text>
</comment>
<comment type="subunit">
    <text evidence="1 2">Heterodimers with GPN1 or GPN3. Binds to RNA polymerase II (RNAPII).</text>
</comment>
<comment type="similarity">
    <text evidence="4">Belongs to the GPN-loop GTPase family.</text>
</comment>
<comment type="caution">
    <text evidence="4">Was originally thought to originate from Bos taurus.</text>
</comment>
<organism>
    <name type="scientific">Sus scrofa</name>
    <name type="common">Pig</name>
    <dbReference type="NCBI Taxonomy" id="9823"/>
    <lineage>
        <taxon>Eukaryota</taxon>
        <taxon>Metazoa</taxon>
        <taxon>Chordata</taxon>
        <taxon>Craniata</taxon>
        <taxon>Vertebrata</taxon>
        <taxon>Euteleostomi</taxon>
        <taxon>Mammalia</taxon>
        <taxon>Eutheria</taxon>
        <taxon>Laurasiatheria</taxon>
        <taxon>Artiodactyla</taxon>
        <taxon>Suina</taxon>
        <taxon>Suidae</taxon>
        <taxon>Sus</taxon>
    </lineage>
</organism>
<accession>Q58DD9</accession>
<dbReference type="EMBL" id="BT021658">
    <property type="protein sequence ID" value="AAX46505.1"/>
    <property type="molecule type" value="mRNA"/>
</dbReference>
<dbReference type="RefSeq" id="XP_003127766.1">
    <property type="nucleotide sequence ID" value="XM_003127718.4"/>
</dbReference>
<dbReference type="SMR" id="Q58DD9"/>
<dbReference type="FunCoup" id="Q58DD9">
    <property type="interactions" value="2451"/>
</dbReference>
<dbReference type="PaxDb" id="9823-ENSSSCP00000003866"/>
<dbReference type="Ensembl" id="ENSSSCT00000102327.1">
    <property type="protein sequence ID" value="ENSSSCP00000080430.1"/>
    <property type="gene ID" value="ENSSSCG00000053928.1"/>
</dbReference>
<dbReference type="Ensembl" id="ENSSSCT00115028323">
    <property type="protein sequence ID" value="ENSSSCP00115026859"/>
    <property type="gene ID" value="ENSSSCG00115016207"/>
</dbReference>
<dbReference type="Ensembl" id="ENSSSCT00130059829">
    <property type="protein sequence ID" value="ENSSSCP00130042877"/>
    <property type="gene ID" value="ENSSSCG00130030655"/>
</dbReference>
<dbReference type="GeneID" id="110255194"/>
<dbReference type="KEGG" id="ssc:110255194"/>
<dbReference type="CTD" id="54707"/>
<dbReference type="eggNOG" id="KOG1533">
    <property type="taxonomic scope" value="Eukaryota"/>
</dbReference>
<dbReference type="GeneTree" id="ENSGT00950000183172"/>
<dbReference type="HOGENOM" id="CLU_037460_0_2_1"/>
<dbReference type="InParanoid" id="Q58DD9"/>
<dbReference type="TreeFam" id="TF300828"/>
<dbReference type="Proteomes" id="UP000008227">
    <property type="component" value="Chromosome 6"/>
</dbReference>
<dbReference type="Proteomes" id="UP000314985">
    <property type="component" value="Unplaced"/>
</dbReference>
<dbReference type="Proteomes" id="UP000694570">
    <property type="component" value="Unplaced"/>
</dbReference>
<dbReference type="Proteomes" id="UP000694571">
    <property type="component" value="Unplaced"/>
</dbReference>
<dbReference type="Proteomes" id="UP000694720">
    <property type="component" value="Unplaced"/>
</dbReference>
<dbReference type="Proteomes" id="UP000694722">
    <property type="component" value="Unplaced"/>
</dbReference>
<dbReference type="Proteomes" id="UP000694723">
    <property type="component" value="Unplaced"/>
</dbReference>
<dbReference type="Proteomes" id="UP000694724">
    <property type="component" value="Unplaced"/>
</dbReference>
<dbReference type="Proteomes" id="UP000694725">
    <property type="component" value="Unplaced"/>
</dbReference>
<dbReference type="Proteomes" id="UP000694726">
    <property type="component" value="Unplaced"/>
</dbReference>
<dbReference type="Proteomes" id="UP000694727">
    <property type="component" value="Unplaced"/>
</dbReference>
<dbReference type="Proteomes" id="UP000694728">
    <property type="component" value="Unplaced"/>
</dbReference>
<dbReference type="GO" id="GO:0005525">
    <property type="term" value="F:GTP binding"/>
    <property type="evidence" value="ECO:0007669"/>
    <property type="project" value="UniProtKB-KW"/>
</dbReference>
<dbReference type="GO" id="GO:0003924">
    <property type="term" value="F:GTPase activity"/>
    <property type="evidence" value="ECO:0000318"/>
    <property type="project" value="GO_Central"/>
</dbReference>
<dbReference type="CDD" id="cd17871">
    <property type="entry name" value="GPN2"/>
    <property type="match status" value="1"/>
</dbReference>
<dbReference type="FunFam" id="3.40.50.300:FF:000338">
    <property type="entry name" value="GPN-loop GTPase 2"/>
    <property type="match status" value="1"/>
</dbReference>
<dbReference type="Gene3D" id="3.40.50.300">
    <property type="entry name" value="P-loop containing nucleotide triphosphate hydrolases"/>
    <property type="match status" value="1"/>
</dbReference>
<dbReference type="InterPro" id="IPR004130">
    <property type="entry name" value="Gpn"/>
</dbReference>
<dbReference type="InterPro" id="IPR030231">
    <property type="entry name" value="Gpn2"/>
</dbReference>
<dbReference type="InterPro" id="IPR027417">
    <property type="entry name" value="P-loop_NTPase"/>
</dbReference>
<dbReference type="PANTHER" id="PTHR21231:SF3">
    <property type="entry name" value="GPN-LOOP GTPASE 2"/>
    <property type="match status" value="1"/>
</dbReference>
<dbReference type="PANTHER" id="PTHR21231">
    <property type="entry name" value="XPA-BINDING PROTEIN 1-RELATED"/>
    <property type="match status" value="1"/>
</dbReference>
<dbReference type="Pfam" id="PF03029">
    <property type="entry name" value="ATP_bind_1"/>
    <property type="match status" value="1"/>
</dbReference>
<dbReference type="SUPFAM" id="SSF52540">
    <property type="entry name" value="P-loop containing nucleoside triphosphate hydrolases"/>
    <property type="match status" value="1"/>
</dbReference>
<evidence type="ECO:0000250" key="1">
    <source>
        <dbReference type="UniProtKB" id="Q08726"/>
    </source>
</evidence>
<evidence type="ECO:0000250" key="2">
    <source>
        <dbReference type="UniProtKB" id="Q9H9Y4"/>
    </source>
</evidence>
<evidence type="ECO:0000250" key="3">
    <source>
        <dbReference type="UniProtKB" id="Q9UYR9"/>
    </source>
</evidence>
<evidence type="ECO:0000305" key="4"/>
<sequence>MAGAAQTTAFGQAVIGPPGSGKTTYCLGMSEFLRALGRRVAVVNLDPANEGLPYECAVDVGELVGLSDVMDELQLGPNGGLLYCMEYLEANLDWLRAKLDPLRGHYFLFDCPGQVELCTHHGALRSIFSQMTQWDLRLTAVHLVDSHYCTDPAKFISVLCTSLATMLHVELPHVNLLSKMDLIEHYGKLAFNLDYYTEVLDLSYLLDHLASDPFFRHYRQLNEKLVQLIEDYSLVSFIPLNIQDKESIQRVLQAVDKANGYCFGVQEQRSLEAMMSAAVGADFHFSSTLGLQEKYLAPSDQPVEQEAMQL</sequence>
<keyword id="KW-0007">Acetylation</keyword>
<keyword id="KW-0342">GTP-binding</keyword>
<keyword id="KW-0378">Hydrolase</keyword>
<keyword id="KW-0547">Nucleotide-binding</keyword>
<keyword id="KW-1185">Reference proteome</keyword>
<proteinExistence type="evidence at transcript level"/>
<feature type="initiator methionine" description="Removed" evidence="2">
    <location>
        <position position="1"/>
    </location>
</feature>
<feature type="chain" id="PRO_0000247828" description="GPN-loop GTPase 2">
    <location>
        <begin position="2"/>
        <end position="310"/>
    </location>
</feature>
<feature type="short sequence motif" description="Gly-Pro-Asn (GPN)-loop; involved in dimer interface" evidence="3">
    <location>
        <begin position="76"/>
        <end position="78"/>
    </location>
</feature>
<feature type="binding site" evidence="3">
    <location>
        <begin position="19"/>
        <end position="24"/>
    </location>
    <ligand>
        <name>GTP</name>
        <dbReference type="ChEBI" id="CHEBI:37565"/>
    </ligand>
</feature>
<feature type="binding site" evidence="3">
    <location>
        <begin position="178"/>
        <end position="181"/>
    </location>
    <ligand>
        <name>GTP</name>
        <dbReference type="ChEBI" id="CHEBI:37565"/>
    </ligand>
</feature>
<feature type="site" description="Stabilizes the phosphate intermediate; shared with dimeric partner" evidence="3">
    <location>
        <position position="78"/>
    </location>
</feature>
<feature type="modified residue" description="N-acetylalanine" evidence="2">
    <location>
        <position position="2"/>
    </location>
</feature>
<gene>
    <name evidence="2" type="primary">GPN2</name>
    <name evidence="2" type="synonym">ATPBD1B</name>
</gene>